<dbReference type="EC" id="2.7.7.38" evidence="1"/>
<dbReference type="EMBL" id="CT573326">
    <property type="protein sequence ID" value="CAK14464.1"/>
    <property type="molecule type" value="Genomic_DNA"/>
</dbReference>
<dbReference type="RefSeq" id="WP_011532875.1">
    <property type="nucleotide sequence ID" value="NC_008027.1"/>
</dbReference>
<dbReference type="SMR" id="Q1ICZ9"/>
<dbReference type="STRING" id="384676.PSEEN1605"/>
<dbReference type="GeneID" id="32804849"/>
<dbReference type="KEGG" id="pen:PSEEN1605"/>
<dbReference type="eggNOG" id="COG1212">
    <property type="taxonomic scope" value="Bacteria"/>
</dbReference>
<dbReference type="HOGENOM" id="CLU_065038_1_0_6"/>
<dbReference type="OrthoDB" id="9815559at2"/>
<dbReference type="UniPathway" id="UPA00030"/>
<dbReference type="UniPathway" id="UPA00358">
    <property type="reaction ID" value="UER00476"/>
</dbReference>
<dbReference type="Proteomes" id="UP000000658">
    <property type="component" value="Chromosome"/>
</dbReference>
<dbReference type="GO" id="GO:0005829">
    <property type="term" value="C:cytosol"/>
    <property type="evidence" value="ECO:0007669"/>
    <property type="project" value="TreeGrafter"/>
</dbReference>
<dbReference type="GO" id="GO:0008690">
    <property type="term" value="F:3-deoxy-manno-octulosonate cytidylyltransferase activity"/>
    <property type="evidence" value="ECO:0007669"/>
    <property type="project" value="UniProtKB-UniRule"/>
</dbReference>
<dbReference type="GO" id="GO:0033468">
    <property type="term" value="P:CMP-keto-3-deoxy-D-manno-octulosonic acid biosynthetic process"/>
    <property type="evidence" value="ECO:0007669"/>
    <property type="project" value="UniProtKB-UniRule"/>
</dbReference>
<dbReference type="GO" id="GO:0009103">
    <property type="term" value="P:lipopolysaccharide biosynthetic process"/>
    <property type="evidence" value="ECO:0007669"/>
    <property type="project" value="UniProtKB-UniRule"/>
</dbReference>
<dbReference type="CDD" id="cd02517">
    <property type="entry name" value="CMP-KDO-Synthetase"/>
    <property type="match status" value="1"/>
</dbReference>
<dbReference type="FunFam" id="3.90.550.10:FF:000011">
    <property type="entry name" value="3-deoxy-manno-octulosonate cytidylyltransferase"/>
    <property type="match status" value="1"/>
</dbReference>
<dbReference type="Gene3D" id="3.90.550.10">
    <property type="entry name" value="Spore Coat Polysaccharide Biosynthesis Protein SpsA, Chain A"/>
    <property type="match status" value="1"/>
</dbReference>
<dbReference type="HAMAP" id="MF_00057">
    <property type="entry name" value="KdsB"/>
    <property type="match status" value="1"/>
</dbReference>
<dbReference type="InterPro" id="IPR003329">
    <property type="entry name" value="Cytidylyl_trans"/>
</dbReference>
<dbReference type="InterPro" id="IPR004528">
    <property type="entry name" value="KdsB"/>
</dbReference>
<dbReference type="InterPro" id="IPR029044">
    <property type="entry name" value="Nucleotide-diphossugar_trans"/>
</dbReference>
<dbReference type="NCBIfam" id="TIGR00466">
    <property type="entry name" value="kdsB"/>
    <property type="match status" value="1"/>
</dbReference>
<dbReference type="NCBIfam" id="NF003950">
    <property type="entry name" value="PRK05450.1-3"/>
    <property type="match status" value="1"/>
</dbReference>
<dbReference type="NCBIfam" id="NF003952">
    <property type="entry name" value="PRK05450.1-5"/>
    <property type="match status" value="1"/>
</dbReference>
<dbReference type="NCBIfam" id="NF009905">
    <property type="entry name" value="PRK13368.1"/>
    <property type="match status" value="1"/>
</dbReference>
<dbReference type="PANTHER" id="PTHR42866">
    <property type="entry name" value="3-DEOXY-MANNO-OCTULOSONATE CYTIDYLYLTRANSFERASE"/>
    <property type="match status" value="1"/>
</dbReference>
<dbReference type="PANTHER" id="PTHR42866:SF2">
    <property type="entry name" value="3-DEOXY-MANNO-OCTULOSONATE CYTIDYLYLTRANSFERASE, MITOCHONDRIAL"/>
    <property type="match status" value="1"/>
</dbReference>
<dbReference type="Pfam" id="PF02348">
    <property type="entry name" value="CTP_transf_3"/>
    <property type="match status" value="1"/>
</dbReference>
<dbReference type="SUPFAM" id="SSF53448">
    <property type="entry name" value="Nucleotide-diphospho-sugar transferases"/>
    <property type="match status" value="1"/>
</dbReference>
<comment type="function">
    <text evidence="1">Activates KDO (a required 8-carbon sugar) for incorporation into bacterial lipopolysaccharide in Gram-negative bacteria.</text>
</comment>
<comment type="catalytic activity">
    <reaction evidence="1">
        <text>3-deoxy-alpha-D-manno-oct-2-ulosonate + CTP = CMP-3-deoxy-beta-D-manno-octulosonate + diphosphate</text>
        <dbReference type="Rhea" id="RHEA:23448"/>
        <dbReference type="ChEBI" id="CHEBI:33019"/>
        <dbReference type="ChEBI" id="CHEBI:37563"/>
        <dbReference type="ChEBI" id="CHEBI:85986"/>
        <dbReference type="ChEBI" id="CHEBI:85987"/>
        <dbReference type="EC" id="2.7.7.38"/>
    </reaction>
</comment>
<comment type="pathway">
    <text evidence="1">Nucleotide-sugar biosynthesis; CMP-3-deoxy-D-manno-octulosonate biosynthesis; CMP-3-deoxy-D-manno-octulosonate from 3-deoxy-D-manno-octulosonate and CTP: step 1/1.</text>
</comment>
<comment type="pathway">
    <text evidence="1">Bacterial outer membrane biogenesis; lipopolysaccharide biosynthesis.</text>
</comment>
<comment type="subcellular location">
    <subcellularLocation>
        <location evidence="1">Cytoplasm</location>
    </subcellularLocation>
</comment>
<comment type="similarity">
    <text evidence="1">Belongs to the KdsB family.</text>
</comment>
<reference key="1">
    <citation type="journal article" date="2006" name="Nat. Biotechnol.">
        <title>Complete genome sequence of the entomopathogenic and metabolically versatile soil bacterium Pseudomonas entomophila.</title>
        <authorList>
            <person name="Vodovar N."/>
            <person name="Vallenet D."/>
            <person name="Cruveiller S."/>
            <person name="Rouy Z."/>
            <person name="Barbe V."/>
            <person name="Acosta C."/>
            <person name="Cattolico L."/>
            <person name="Jubin C."/>
            <person name="Lajus A."/>
            <person name="Segurens B."/>
            <person name="Vacherie B."/>
            <person name="Wincker P."/>
            <person name="Weissenbach J."/>
            <person name="Lemaitre B."/>
            <person name="Medigue C."/>
            <person name="Boccard F."/>
        </authorList>
    </citation>
    <scope>NUCLEOTIDE SEQUENCE [LARGE SCALE GENOMIC DNA]</scope>
    <source>
        <strain>L48</strain>
    </source>
</reference>
<name>KDSB_PSEE4</name>
<accession>Q1ICZ9</accession>
<sequence length="254" mass="27735">MSLDFTVVIPARLRSTRLPGKPLLPIAGKPMVQHVWEQARRSGASRVVIATDDASIVEACRAFGAEVLLTRADHESGTDRLAEVAAQLGLAPDAIVVNVQGDEPLIPPVIIDQVAANLADHPEAGIATLAEPIHEPETIFNPNAVKVVSDKHGLALTFSRAPLPWARDAFAKDRSQLPVGVPYRRHIGMYAYRVGFLQDFVAWGPCWLEQTESLEQLRALWHGVRIHVADAIEAPAVGVDTPEDLERVRRLLEA</sequence>
<feature type="chain" id="PRO_1000003373" description="3-deoxy-manno-octulosonate cytidylyltransferase">
    <location>
        <begin position="1"/>
        <end position="254"/>
    </location>
</feature>
<gene>
    <name evidence="1" type="primary">kdsB</name>
    <name type="ordered locus">PSEEN1605</name>
</gene>
<evidence type="ECO:0000255" key="1">
    <source>
        <dbReference type="HAMAP-Rule" id="MF_00057"/>
    </source>
</evidence>
<organism>
    <name type="scientific">Pseudomonas entomophila (strain L48)</name>
    <dbReference type="NCBI Taxonomy" id="384676"/>
    <lineage>
        <taxon>Bacteria</taxon>
        <taxon>Pseudomonadati</taxon>
        <taxon>Pseudomonadota</taxon>
        <taxon>Gammaproteobacteria</taxon>
        <taxon>Pseudomonadales</taxon>
        <taxon>Pseudomonadaceae</taxon>
        <taxon>Pseudomonas</taxon>
    </lineage>
</organism>
<keyword id="KW-0963">Cytoplasm</keyword>
<keyword id="KW-0448">Lipopolysaccharide biosynthesis</keyword>
<keyword id="KW-0548">Nucleotidyltransferase</keyword>
<keyword id="KW-0808">Transferase</keyword>
<proteinExistence type="inferred from homology"/>
<protein>
    <recommendedName>
        <fullName evidence="1">3-deoxy-manno-octulosonate cytidylyltransferase</fullName>
        <ecNumber evidence="1">2.7.7.38</ecNumber>
    </recommendedName>
    <alternativeName>
        <fullName evidence="1">CMP-2-keto-3-deoxyoctulosonic acid synthase</fullName>
        <shortName evidence="1">CKS</shortName>
        <shortName evidence="1">CMP-KDO synthase</shortName>
    </alternativeName>
</protein>